<organism>
    <name type="scientific">Brugia malayi</name>
    <name type="common">Filarial nematode worm</name>
    <dbReference type="NCBI Taxonomy" id="6279"/>
    <lineage>
        <taxon>Eukaryota</taxon>
        <taxon>Metazoa</taxon>
        <taxon>Ecdysozoa</taxon>
        <taxon>Nematoda</taxon>
        <taxon>Chromadorea</taxon>
        <taxon>Rhabditida</taxon>
        <taxon>Spirurina</taxon>
        <taxon>Spiruromorpha</taxon>
        <taxon>Filarioidea</taxon>
        <taxon>Onchocercidae</taxon>
        <taxon>Brugia</taxon>
    </lineage>
</organism>
<proteinExistence type="inferred from homology"/>
<evidence type="ECO:0000255" key="1">
    <source>
        <dbReference type="HAMAP-Rule" id="MF_03011"/>
    </source>
</evidence>
<evidence type="ECO:0000255" key="2">
    <source>
        <dbReference type="PROSITE-ProRule" id="PRU01185"/>
    </source>
</evidence>
<evidence type="ECO:0000256" key="3">
    <source>
        <dbReference type="SAM" id="MobiDB-lite"/>
    </source>
</evidence>
<evidence type="ECO:0000312" key="4">
    <source>
        <dbReference type="WormBase" id="Bm2278"/>
    </source>
</evidence>
<protein>
    <recommendedName>
        <fullName evidence="1">Eukaryotic translation initiation factor 3 subunit L</fullName>
        <shortName evidence="1">eIF3l</shortName>
    </recommendedName>
</protein>
<sequence>MVRDSFDGGHTGDPERDLAYEREHVRRDTMSDEVVPDDVAQYLIYFKRMIDEENVVEIHNLYEHGFPDLTERYFQQRLWPNEEAVENIVGSGNRIVAFSDSRIFIILYKELYFRHVYTRMQRGPSLAHRFDSYQNYQELFCEVLTPEKQPLSLQLPNVWLWDIIDEFVYQPFCLYKANPGKRSPEEYEDLLSIEQNQSAWNIYPVLNILYSLLAKSQIDEQLLAIREGRNPDDVADDFGRSALYFKLGYFSLIGLLRTHVLLGDYHQALKTVENLELDPKGLYNTVPSCLVTFHYFVGFSHMMMRNYGEATKIFVNCLLYIQRTKSVQQQNQQQKKNFQYDVIGKTNEQLYHLLAICLTLQPQRIDDSIQSQLYERTGERMNHMSNGNIDEFRLAFQQGCPKFLSPTTVVYEGPNQAKEPLLRQCNAFLEEIESQIMLPILRGYLKLYTTLPTRKLASFMDVSDADYDSFVGKLLSFKMIVNELGKECMDRCEIDDSTTDLDFYVDKDMIIIADTKVARRIGEYFIKQIQKLQEVNRKLKELPVIPAVSS</sequence>
<feature type="chain" id="PRO_0000364236" description="Eukaryotic translation initiation factor 3 subunit L">
    <location>
        <begin position="1"/>
        <end position="550"/>
    </location>
</feature>
<feature type="domain" description="PCI" evidence="2">
    <location>
        <begin position="309"/>
        <end position="503"/>
    </location>
</feature>
<feature type="region of interest" description="Disordered" evidence="3">
    <location>
        <begin position="1"/>
        <end position="20"/>
    </location>
</feature>
<dbReference type="EMBL" id="DS239215">
    <property type="protein sequence ID" value="EDP34536.1"/>
    <property type="molecule type" value="Genomic_DNA"/>
</dbReference>
<dbReference type="RefSeq" id="XP_001896613.1">
    <property type="nucleotide sequence ID" value="XM_001896578.1"/>
</dbReference>
<dbReference type="SMR" id="A8PHP4"/>
<dbReference type="FunCoup" id="A8PHP4">
    <property type="interactions" value="1906"/>
</dbReference>
<dbReference type="STRING" id="6279.A8PHP4"/>
<dbReference type="WormBase" id="Bm2278">
    <property type="protein sequence ID" value="BM25688"/>
    <property type="gene ID" value="WBGene00222539"/>
</dbReference>
<dbReference type="InParanoid" id="A8PHP4"/>
<dbReference type="Proteomes" id="UP000006672">
    <property type="component" value="Unassembled WGS sequence"/>
</dbReference>
<dbReference type="GO" id="GO:0016282">
    <property type="term" value="C:eukaryotic 43S preinitiation complex"/>
    <property type="evidence" value="ECO:0007669"/>
    <property type="project" value="UniProtKB-UniRule"/>
</dbReference>
<dbReference type="GO" id="GO:0033290">
    <property type="term" value="C:eukaryotic 48S preinitiation complex"/>
    <property type="evidence" value="ECO:0007669"/>
    <property type="project" value="UniProtKB-UniRule"/>
</dbReference>
<dbReference type="GO" id="GO:0005852">
    <property type="term" value="C:eukaryotic translation initiation factor 3 complex"/>
    <property type="evidence" value="ECO:0007669"/>
    <property type="project" value="UniProtKB-UniRule"/>
</dbReference>
<dbReference type="GO" id="GO:0003743">
    <property type="term" value="F:translation initiation factor activity"/>
    <property type="evidence" value="ECO:0007669"/>
    <property type="project" value="UniProtKB-UniRule"/>
</dbReference>
<dbReference type="GO" id="GO:0001732">
    <property type="term" value="P:formation of cytoplasmic translation initiation complex"/>
    <property type="evidence" value="ECO:0007669"/>
    <property type="project" value="UniProtKB-UniRule"/>
</dbReference>
<dbReference type="HAMAP" id="MF_03011">
    <property type="entry name" value="eIF3l"/>
    <property type="match status" value="1"/>
</dbReference>
<dbReference type="InterPro" id="IPR019382">
    <property type="entry name" value="eIF3l"/>
</dbReference>
<dbReference type="InterPro" id="IPR000717">
    <property type="entry name" value="PCI_dom"/>
</dbReference>
<dbReference type="PANTHER" id="PTHR13242">
    <property type="entry name" value="EUKARYOTIC TRANSLATION INITIATION FACTOR 3"/>
    <property type="match status" value="1"/>
</dbReference>
<dbReference type="PANTHER" id="PTHR13242:SF0">
    <property type="entry name" value="EUKARYOTIC TRANSLATION INITIATION FACTOR 3 SUBUNIT L"/>
    <property type="match status" value="1"/>
</dbReference>
<dbReference type="Pfam" id="PF10255">
    <property type="entry name" value="Paf67"/>
    <property type="match status" value="1"/>
</dbReference>
<dbReference type="PROSITE" id="PS50250">
    <property type="entry name" value="PCI"/>
    <property type="match status" value="1"/>
</dbReference>
<accession>A8PHP4</accession>
<keyword id="KW-0963">Cytoplasm</keyword>
<keyword id="KW-0396">Initiation factor</keyword>
<keyword id="KW-0648">Protein biosynthesis</keyword>
<keyword id="KW-1185">Reference proteome</keyword>
<reference key="1">
    <citation type="journal article" date="2007" name="Science">
        <title>Draft genome of the filarial nematode parasite Brugia malayi.</title>
        <authorList>
            <person name="Ghedin E."/>
            <person name="Wang S."/>
            <person name="Spiro D."/>
            <person name="Caler E."/>
            <person name="Zhao Q."/>
            <person name="Crabtree J."/>
            <person name="Allen J.E."/>
            <person name="Delcher A.L."/>
            <person name="Guiliano D.B."/>
            <person name="Miranda-Saavedra D."/>
            <person name="Angiuoli S.V."/>
            <person name="Creasy T."/>
            <person name="Amedeo P."/>
            <person name="Haas B."/>
            <person name="El-Sayed N.M."/>
            <person name="Wortman J.R."/>
            <person name="Feldblyum T."/>
            <person name="Tallon L."/>
            <person name="Schatz M."/>
            <person name="Shumway M."/>
            <person name="Koo H."/>
            <person name="Salzberg S.L."/>
            <person name="Schobel S."/>
            <person name="Pertea M."/>
            <person name="Pop M."/>
            <person name="White O."/>
            <person name="Barton G.J."/>
            <person name="Carlow C.K.S."/>
            <person name="Crawford M.J."/>
            <person name="Daub J."/>
            <person name="Dimmic M.W."/>
            <person name="Estes C.F."/>
            <person name="Foster J.M."/>
            <person name="Ganatra M."/>
            <person name="Gregory W.F."/>
            <person name="Johnson N.M."/>
            <person name="Jin J."/>
            <person name="Komuniecki R."/>
            <person name="Korf I."/>
            <person name="Kumar S."/>
            <person name="Laney S."/>
            <person name="Li B.-W."/>
            <person name="Li W."/>
            <person name="Lindblom T.H."/>
            <person name="Lustigman S."/>
            <person name="Ma D."/>
            <person name="Maina C.V."/>
            <person name="Martin D.M."/>
            <person name="McCarter J.P."/>
            <person name="McReynolds L."/>
            <person name="Mitreva M."/>
            <person name="Nutman T.B."/>
            <person name="Parkinson J."/>
            <person name="Peregrin-Alvarez J.M."/>
            <person name="Poole C."/>
            <person name="Ren Q."/>
            <person name="Saunders L."/>
            <person name="Sluder A.E."/>
            <person name="Smith K."/>
            <person name="Stanke M."/>
            <person name="Unnasch T.R."/>
            <person name="Ware J."/>
            <person name="Wei A.D."/>
            <person name="Weil G."/>
            <person name="Williams D.J."/>
            <person name="Zhang Y."/>
            <person name="Williams S.A."/>
            <person name="Fraser-Liggett C."/>
            <person name="Slatko B."/>
            <person name="Blaxter M.L."/>
            <person name="Scott A.L."/>
        </authorList>
    </citation>
    <scope>NUCLEOTIDE SEQUENCE [LARGE SCALE GENOMIC DNA]</scope>
</reference>
<gene>
    <name evidence="4" type="ORF">Bm2278</name>
</gene>
<comment type="function">
    <text evidence="1">Component of the eukaryotic translation initiation factor 3 (eIF-3) complex, which is involved in protein synthesis of a specialized repertoire of mRNAs and, together with other initiation factors, stimulates binding of mRNA and methionyl-tRNAi to the 40S ribosome. The eIF-3 complex specifically targets and initiates translation of a subset of mRNAs involved in cell proliferation.</text>
</comment>
<comment type="subunit">
    <text evidence="1">Component of the eukaryotic translation initiation factor 3 (eIF-3) complex.</text>
</comment>
<comment type="subcellular location">
    <subcellularLocation>
        <location evidence="1">Cytoplasm</location>
    </subcellularLocation>
</comment>
<comment type="similarity">
    <text evidence="1">Belongs to the eIF-3 subunit L family.</text>
</comment>
<name>EIF3L_BRUMA</name>